<reference key="1">
    <citation type="journal article" date="2009" name="PLoS Genet.">
        <title>Organised genome dynamics in the Escherichia coli species results in highly diverse adaptive paths.</title>
        <authorList>
            <person name="Touchon M."/>
            <person name="Hoede C."/>
            <person name="Tenaillon O."/>
            <person name="Barbe V."/>
            <person name="Baeriswyl S."/>
            <person name="Bidet P."/>
            <person name="Bingen E."/>
            <person name="Bonacorsi S."/>
            <person name="Bouchier C."/>
            <person name="Bouvet O."/>
            <person name="Calteau A."/>
            <person name="Chiapello H."/>
            <person name="Clermont O."/>
            <person name="Cruveiller S."/>
            <person name="Danchin A."/>
            <person name="Diard M."/>
            <person name="Dossat C."/>
            <person name="Karoui M.E."/>
            <person name="Frapy E."/>
            <person name="Garry L."/>
            <person name="Ghigo J.M."/>
            <person name="Gilles A.M."/>
            <person name="Johnson J."/>
            <person name="Le Bouguenec C."/>
            <person name="Lescat M."/>
            <person name="Mangenot S."/>
            <person name="Martinez-Jehanne V."/>
            <person name="Matic I."/>
            <person name="Nassif X."/>
            <person name="Oztas S."/>
            <person name="Petit M.A."/>
            <person name="Pichon C."/>
            <person name="Rouy Z."/>
            <person name="Ruf C.S."/>
            <person name="Schneider D."/>
            <person name="Tourret J."/>
            <person name="Vacherie B."/>
            <person name="Vallenet D."/>
            <person name="Medigue C."/>
            <person name="Rocha E.P.C."/>
            <person name="Denamur E."/>
        </authorList>
    </citation>
    <scope>NUCLEOTIDE SEQUENCE [LARGE SCALE GENOMIC DNA]</scope>
    <source>
        <strain>S88 / ExPEC</strain>
    </source>
</reference>
<proteinExistence type="inferred from homology"/>
<protein>
    <recommendedName>
        <fullName evidence="1">Lysophospholipid transporter LplT</fullName>
    </recommendedName>
</protein>
<gene>
    <name evidence="1" type="primary">lplT</name>
    <name type="ordered locus">ECS88_3130</name>
</gene>
<organism>
    <name type="scientific">Escherichia coli O45:K1 (strain S88 / ExPEC)</name>
    <dbReference type="NCBI Taxonomy" id="585035"/>
    <lineage>
        <taxon>Bacteria</taxon>
        <taxon>Pseudomonadati</taxon>
        <taxon>Pseudomonadota</taxon>
        <taxon>Gammaproteobacteria</taxon>
        <taxon>Enterobacterales</taxon>
        <taxon>Enterobacteriaceae</taxon>
        <taxon>Escherichia</taxon>
    </lineage>
</organism>
<comment type="function">
    <text evidence="1">Catalyzes the facilitated diffusion of 2-acyl-glycero-3-phosphoethanolamine (2-acyl-GPE) into the cell.</text>
</comment>
<comment type="subcellular location">
    <subcellularLocation>
        <location evidence="1">Cell inner membrane</location>
        <topology evidence="1">Multi-pass membrane protein</topology>
    </subcellularLocation>
</comment>
<comment type="similarity">
    <text evidence="1">Belongs to the major facilitator superfamily. LplT (TC 2.A.1.42) family.</text>
</comment>
<evidence type="ECO:0000255" key="1">
    <source>
        <dbReference type="HAMAP-Rule" id="MF_01585"/>
    </source>
</evidence>
<keyword id="KW-0997">Cell inner membrane</keyword>
<keyword id="KW-1003">Cell membrane</keyword>
<keyword id="KW-0445">Lipid transport</keyword>
<keyword id="KW-0472">Membrane</keyword>
<keyword id="KW-1185">Reference proteome</keyword>
<keyword id="KW-0812">Transmembrane</keyword>
<keyword id="KW-1133">Transmembrane helix</keyword>
<keyword id="KW-0813">Transport</keyword>
<dbReference type="EMBL" id="CU928161">
    <property type="protein sequence ID" value="CAR04370.1"/>
    <property type="molecule type" value="Genomic_DNA"/>
</dbReference>
<dbReference type="RefSeq" id="WP_000004601.1">
    <property type="nucleotide sequence ID" value="NC_011742.1"/>
</dbReference>
<dbReference type="SMR" id="B7MLI1"/>
<dbReference type="KEGG" id="ecz:ECS88_3130"/>
<dbReference type="HOGENOM" id="CLU_047399_0_0_6"/>
<dbReference type="Proteomes" id="UP000000747">
    <property type="component" value="Chromosome"/>
</dbReference>
<dbReference type="GO" id="GO:0005886">
    <property type="term" value="C:plasma membrane"/>
    <property type="evidence" value="ECO:0007669"/>
    <property type="project" value="UniProtKB-SubCell"/>
</dbReference>
<dbReference type="GO" id="GO:0051978">
    <property type="term" value="F:lysophospholipid:sodium symporter activity"/>
    <property type="evidence" value="ECO:0007669"/>
    <property type="project" value="InterPro"/>
</dbReference>
<dbReference type="CDD" id="cd06173">
    <property type="entry name" value="MFS_MefA_like"/>
    <property type="match status" value="1"/>
</dbReference>
<dbReference type="FunFam" id="1.20.1250.20:FF:000091">
    <property type="entry name" value="Lysophospholipid transporter LplT"/>
    <property type="match status" value="1"/>
</dbReference>
<dbReference type="Gene3D" id="1.20.1250.20">
    <property type="entry name" value="MFS general substrate transporter like domains"/>
    <property type="match status" value="1"/>
</dbReference>
<dbReference type="HAMAP" id="MF_01585">
    <property type="entry name" value="MFS_LplT"/>
    <property type="match status" value="1"/>
</dbReference>
<dbReference type="InterPro" id="IPR023727">
    <property type="entry name" value="LysoPLipid__transptr_LplT"/>
</dbReference>
<dbReference type="InterPro" id="IPR011701">
    <property type="entry name" value="MFS"/>
</dbReference>
<dbReference type="InterPro" id="IPR036259">
    <property type="entry name" value="MFS_trans_sf"/>
</dbReference>
<dbReference type="NCBIfam" id="NF008397">
    <property type="entry name" value="PRK11195.1"/>
    <property type="match status" value="1"/>
</dbReference>
<dbReference type="PANTHER" id="PTHR43266">
    <property type="entry name" value="MACROLIDE-EFFLUX PROTEIN"/>
    <property type="match status" value="1"/>
</dbReference>
<dbReference type="PANTHER" id="PTHR43266:SF2">
    <property type="entry name" value="MAJOR FACILITATOR SUPERFAMILY (MFS) PROFILE DOMAIN-CONTAINING PROTEIN"/>
    <property type="match status" value="1"/>
</dbReference>
<dbReference type="Pfam" id="PF07690">
    <property type="entry name" value="MFS_1"/>
    <property type="match status" value="1"/>
</dbReference>
<dbReference type="SUPFAM" id="SSF103473">
    <property type="entry name" value="MFS general substrate transporter"/>
    <property type="match status" value="1"/>
</dbReference>
<name>LPLT_ECO45</name>
<accession>B7MLI1</accession>
<feature type="chain" id="PRO_1000201268" description="Lysophospholipid transporter LplT">
    <location>
        <begin position="1"/>
        <end position="397"/>
    </location>
</feature>
<feature type="topological domain" description="Periplasmic" evidence="1">
    <location>
        <begin position="1"/>
        <end position="17"/>
    </location>
</feature>
<feature type="transmembrane region" description="Helical" evidence="1">
    <location>
        <begin position="18"/>
        <end position="38"/>
    </location>
</feature>
<feature type="topological domain" description="Cytoplasmic" evidence="1">
    <location>
        <begin position="39"/>
        <end position="52"/>
    </location>
</feature>
<feature type="transmembrane region" description="Helical" evidence="1">
    <location>
        <begin position="53"/>
        <end position="73"/>
    </location>
</feature>
<feature type="topological domain" description="Periplasmic" evidence="1">
    <location>
        <begin position="74"/>
        <end position="90"/>
    </location>
</feature>
<feature type="transmembrane region" description="Helical" evidence="1">
    <location>
        <begin position="91"/>
        <end position="111"/>
    </location>
</feature>
<feature type="topological domain" description="Cytoplasmic" evidence="1">
    <location>
        <begin position="112"/>
        <end position="144"/>
    </location>
</feature>
<feature type="transmembrane region" description="Helical" evidence="1">
    <location>
        <begin position="145"/>
        <end position="165"/>
    </location>
</feature>
<feature type="topological domain" description="Periplasmic" evidence="1">
    <location>
        <position position="166"/>
    </location>
</feature>
<feature type="transmembrane region" description="Helical" evidence="1">
    <location>
        <begin position="167"/>
        <end position="187"/>
    </location>
</feature>
<feature type="topological domain" description="Cytoplasmic" evidence="1">
    <location>
        <begin position="188"/>
        <end position="226"/>
    </location>
</feature>
<feature type="transmembrane region" description="Helical" evidence="1">
    <location>
        <begin position="227"/>
        <end position="247"/>
    </location>
</feature>
<feature type="topological domain" description="Periplasmic" evidence="1">
    <location>
        <begin position="248"/>
        <end position="256"/>
    </location>
</feature>
<feature type="transmembrane region" description="Helical" evidence="1">
    <location>
        <begin position="257"/>
        <end position="277"/>
    </location>
</feature>
<feature type="topological domain" description="Cytoplasmic" evidence="1">
    <location>
        <begin position="278"/>
        <end position="280"/>
    </location>
</feature>
<feature type="transmembrane region" description="Helical" evidence="1">
    <location>
        <begin position="281"/>
        <end position="301"/>
    </location>
</feature>
<feature type="topological domain" description="Periplasmic" evidence="1">
    <location>
        <begin position="302"/>
        <end position="304"/>
    </location>
</feature>
<feature type="transmembrane region" description="Helical" evidence="1">
    <location>
        <begin position="305"/>
        <end position="325"/>
    </location>
</feature>
<feature type="topological domain" description="Cytoplasmic" evidence="1">
    <location>
        <begin position="326"/>
        <end position="343"/>
    </location>
</feature>
<feature type="transmembrane region" description="Helical" evidence="1">
    <location>
        <begin position="344"/>
        <end position="364"/>
    </location>
</feature>
<feature type="topological domain" description="Periplasmic" evidence="1">
    <location>
        <begin position="365"/>
        <end position="366"/>
    </location>
</feature>
<feature type="transmembrane region" description="Helical" evidence="1">
    <location>
        <begin position="367"/>
        <end position="387"/>
    </location>
</feature>
<feature type="topological domain" description="Cytoplasmic" evidence="1">
    <location>
        <begin position="388"/>
        <end position="397"/>
    </location>
</feature>
<sequence>MSESVHTNTSLWSKGMKAVIVAQFLSAFGDNALLFATLALLKAQFYPEWSQPILQMVFVGAYILFAPFVGQVADSFAKGRVMMFANGLKLLGAASICFGINPFLGYTLVGVGAAAYSPAKYGILGELTTGSKLVKANGLMEASTIAAILLGSVAGGVLADWHILVALVACALAYGGAVVANIYIPKLAAARPGQSWNLISMTRSFLNACTSLWRNGETRFSLVGTSLFWGAGVTLRFLLVLWVPVALGITDNATPTYLNAMVAIGIVVGAGAAAKLVTLETVSRCMPAGILIGVVVLIFSLQHELLPAYALLMLIGVLGGFFVVPLNALLQERGKKSVGAGNAIAVQNLGENSAMLLMLGIYSLAVMVGIPVVPIGIGFGALFALAITALWIWQRRH</sequence>